<dbReference type="EC" id="4.3.2.7" evidence="3"/>
<dbReference type="EMBL" id="AL929049">
    <property type="protein sequence ID" value="CAI20656.1"/>
    <property type="molecule type" value="Genomic_DNA"/>
</dbReference>
<dbReference type="EMBL" id="BX897725">
    <property type="protein sequence ID" value="CAI11900.1"/>
    <property type="molecule type" value="Genomic_DNA"/>
</dbReference>
<dbReference type="RefSeq" id="NP_001103596.2">
    <property type="nucleotide sequence ID" value="NM_001110126.2"/>
</dbReference>
<dbReference type="SMR" id="Q5SPB6"/>
<dbReference type="FunCoup" id="Q5SPB6">
    <property type="interactions" value="556"/>
</dbReference>
<dbReference type="STRING" id="7955.ENSDARP00000094107"/>
<dbReference type="PaxDb" id="7955-ENSDARP00000094107"/>
<dbReference type="Ensembl" id="ENSDART00000103330">
    <property type="protein sequence ID" value="ENSDARP00000094107"/>
    <property type="gene ID" value="ENSDARG00000070426"/>
</dbReference>
<dbReference type="GeneID" id="563855"/>
<dbReference type="KEGG" id="dre:563855"/>
<dbReference type="AGR" id="ZFIN:ZDB-GENE-030131-1957"/>
<dbReference type="CTD" id="79094"/>
<dbReference type="ZFIN" id="ZDB-GENE-030131-1957">
    <property type="gene designation" value="chac1"/>
</dbReference>
<dbReference type="eggNOG" id="KOG3182">
    <property type="taxonomic scope" value="Eukaryota"/>
</dbReference>
<dbReference type="HOGENOM" id="CLU_070703_2_2_1"/>
<dbReference type="InParanoid" id="Q5SPB6"/>
<dbReference type="OMA" id="WIFGYGE"/>
<dbReference type="OrthoDB" id="1933483at2759"/>
<dbReference type="PhylomeDB" id="Q5SPB6"/>
<dbReference type="TreeFam" id="TF313048"/>
<dbReference type="Reactome" id="R-DRE-174403">
    <property type="pathway name" value="Glutathione synthesis and recycling"/>
</dbReference>
<dbReference type="PRO" id="PR:Q5SPB6"/>
<dbReference type="Proteomes" id="UP000000437">
    <property type="component" value="Chromosome 20"/>
</dbReference>
<dbReference type="Bgee" id="ENSDARG00000070426">
    <property type="expression patterns" value="Expressed in swim bladder and 48 other cell types or tissues"/>
</dbReference>
<dbReference type="ExpressionAtlas" id="Q5SPB6">
    <property type="expression patterns" value="differential"/>
</dbReference>
<dbReference type="GO" id="GO:0005737">
    <property type="term" value="C:cytoplasm"/>
    <property type="evidence" value="ECO:0000318"/>
    <property type="project" value="GO_Central"/>
</dbReference>
<dbReference type="GO" id="GO:0005829">
    <property type="term" value="C:cytosol"/>
    <property type="evidence" value="ECO:0007669"/>
    <property type="project" value="UniProtKB-SubCell"/>
</dbReference>
<dbReference type="GO" id="GO:0005802">
    <property type="term" value="C:trans-Golgi network"/>
    <property type="evidence" value="ECO:0000250"/>
    <property type="project" value="UniProtKB"/>
</dbReference>
<dbReference type="GO" id="GO:0061928">
    <property type="term" value="F:glutathione specific gamma-glutamylcyclotransferase activity"/>
    <property type="evidence" value="ECO:0000318"/>
    <property type="project" value="GO_Central"/>
</dbReference>
<dbReference type="GO" id="GO:0005112">
    <property type="term" value="F:Notch binding"/>
    <property type="evidence" value="ECO:0000250"/>
    <property type="project" value="UniProtKB"/>
</dbReference>
<dbReference type="GO" id="GO:0006915">
    <property type="term" value="P:apoptotic process"/>
    <property type="evidence" value="ECO:0007669"/>
    <property type="project" value="UniProtKB-KW"/>
</dbReference>
<dbReference type="GO" id="GO:0006751">
    <property type="term" value="P:glutathione catabolic process"/>
    <property type="evidence" value="ECO:0000314"/>
    <property type="project" value="ZFIN"/>
</dbReference>
<dbReference type="GO" id="GO:0045746">
    <property type="term" value="P:negative regulation of Notch signaling pathway"/>
    <property type="evidence" value="ECO:0000250"/>
    <property type="project" value="UniProtKB"/>
</dbReference>
<dbReference type="GO" id="GO:0010955">
    <property type="term" value="P:negative regulation of protein processing"/>
    <property type="evidence" value="ECO:0000250"/>
    <property type="project" value="UniProtKB"/>
</dbReference>
<dbReference type="GO" id="GO:0022008">
    <property type="term" value="P:neurogenesis"/>
    <property type="evidence" value="ECO:0000250"/>
    <property type="project" value="UniProtKB"/>
</dbReference>
<dbReference type="GO" id="GO:0007219">
    <property type="term" value="P:Notch signaling pathway"/>
    <property type="evidence" value="ECO:0007669"/>
    <property type="project" value="UniProtKB-KW"/>
</dbReference>
<dbReference type="GO" id="GO:0006986">
    <property type="term" value="P:response to unfolded protein"/>
    <property type="evidence" value="ECO:0007669"/>
    <property type="project" value="UniProtKB-KW"/>
</dbReference>
<dbReference type="CDD" id="cd06661">
    <property type="entry name" value="GGCT_like"/>
    <property type="match status" value="1"/>
</dbReference>
<dbReference type="FunFam" id="3.10.490.10:FF:000005">
    <property type="entry name" value="Gamma-glutamylcyclotransferase"/>
    <property type="match status" value="1"/>
</dbReference>
<dbReference type="Gene3D" id="3.10.490.10">
    <property type="entry name" value="Gamma-glutamyl cyclotransferase-like"/>
    <property type="match status" value="1"/>
</dbReference>
<dbReference type="InterPro" id="IPR006840">
    <property type="entry name" value="ChaC"/>
</dbReference>
<dbReference type="InterPro" id="IPR013024">
    <property type="entry name" value="GGCT-like"/>
</dbReference>
<dbReference type="InterPro" id="IPR036568">
    <property type="entry name" value="GGCT-like_sf"/>
</dbReference>
<dbReference type="PANTHER" id="PTHR12192">
    <property type="entry name" value="CATION TRANSPORT PROTEIN CHAC-RELATED"/>
    <property type="match status" value="1"/>
</dbReference>
<dbReference type="PANTHER" id="PTHR12192:SF26">
    <property type="entry name" value="GLUTATHIONE-SPECIFIC GAMMA-GLUTAMYLCYCLOTRANSFERASE 1"/>
    <property type="match status" value="1"/>
</dbReference>
<dbReference type="Pfam" id="PF04752">
    <property type="entry name" value="ChaC"/>
    <property type="match status" value="1"/>
</dbReference>
<dbReference type="SUPFAM" id="SSF110857">
    <property type="entry name" value="Gamma-glutamyl cyclotransferase-like"/>
    <property type="match status" value="1"/>
</dbReference>
<feature type="chain" id="PRO_0000239012" description="Glutathione-specific gamma-glutamylcyclotransferase 1">
    <location>
        <begin position="1"/>
        <end position="196"/>
    </location>
</feature>
<feature type="active site" description="Proton acceptor" evidence="1">
    <location>
        <position position="95"/>
    </location>
</feature>
<feature type="binding site" evidence="1">
    <location>
        <begin position="15"/>
        <end position="20"/>
    </location>
    <ligand>
        <name>substrate</name>
    </ligand>
</feature>
<comment type="function">
    <text evidence="3">Catalyzes the cleavage of glutathione into 5-oxo-L-proline and a Cys-Gly dipeptide. Acts specifically on glutathione, but not on other gamma-glutamyl peptides. Glutathione depletion is an important factor for apoptosis initiation and execution. Acts as a pro-apoptotic component of the unfolded protein response pathway by mediating the pro-apoptotic effects of the ATF4-ATF3-DDIT3/CHOP cascade. Negative regulator of Notch signaling pathway involved in embryonic neurogenesis: acts by inhibiting Notch cleavage by furin, maintaining Notch in an immature inactive form, thereby promoting neurogenesis in embryos.</text>
</comment>
<comment type="catalytic activity">
    <reaction evidence="3">
        <text>glutathione = L-cysteinylglycine + 5-oxo-L-proline</text>
        <dbReference type="Rhea" id="RHEA:47724"/>
        <dbReference type="ChEBI" id="CHEBI:57925"/>
        <dbReference type="ChEBI" id="CHEBI:58402"/>
        <dbReference type="ChEBI" id="CHEBI:61694"/>
        <dbReference type="EC" id="4.3.2.7"/>
    </reaction>
</comment>
<comment type="subcellular location">
    <subcellularLocation>
        <location evidence="3">Cytoplasm</location>
        <location evidence="3">Cytosol</location>
    </subcellularLocation>
    <subcellularLocation>
        <location evidence="2">Golgi apparatus</location>
        <location evidence="2">trans-Golgi network</location>
    </subcellularLocation>
</comment>
<comment type="similarity">
    <text evidence="4">Belongs to the gamma-glutamylcyclotransferase family. ChaC subfamily.</text>
</comment>
<organism>
    <name type="scientific">Danio rerio</name>
    <name type="common">Zebrafish</name>
    <name type="synonym">Brachydanio rerio</name>
    <dbReference type="NCBI Taxonomy" id="7955"/>
    <lineage>
        <taxon>Eukaryota</taxon>
        <taxon>Metazoa</taxon>
        <taxon>Chordata</taxon>
        <taxon>Craniata</taxon>
        <taxon>Vertebrata</taxon>
        <taxon>Euteleostomi</taxon>
        <taxon>Actinopterygii</taxon>
        <taxon>Neopterygii</taxon>
        <taxon>Teleostei</taxon>
        <taxon>Ostariophysi</taxon>
        <taxon>Cypriniformes</taxon>
        <taxon>Danionidae</taxon>
        <taxon>Danioninae</taxon>
        <taxon>Danio</taxon>
    </lineage>
</organism>
<gene>
    <name evidence="3" type="primary">chac1</name>
</gene>
<protein>
    <recommendedName>
        <fullName evidence="3">Glutathione-specific gamma-glutamylcyclotransferase 1</fullName>
        <shortName evidence="3">Gamma-GCG 1</shortName>
        <ecNumber evidence="3">4.3.2.7</ecNumber>
    </recommendedName>
    <alternativeName>
        <fullName evidence="3">Cation transport regulator-like protein 1</fullName>
    </alternativeName>
</protein>
<reference key="1">
    <citation type="journal article" date="2013" name="Nature">
        <title>The zebrafish reference genome sequence and its relationship to the human genome.</title>
        <authorList>
            <person name="Howe K."/>
            <person name="Clark M.D."/>
            <person name="Torroja C.F."/>
            <person name="Torrance J."/>
            <person name="Berthelot C."/>
            <person name="Muffato M."/>
            <person name="Collins J.E."/>
            <person name="Humphray S."/>
            <person name="McLaren K."/>
            <person name="Matthews L."/>
            <person name="McLaren S."/>
            <person name="Sealy I."/>
            <person name="Caccamo M."/>
            <person name="Churcher C."/>
            <person name="Scott C."/>
            <person name="Barrett J.C."/>
            <person name="Koch R."/>
            <person name="Rauch G.J."/>
            <person name="White S."/>
            <person name="Chow W."/>
            <person name="Kilian B."/>
            <person name="Quintais L.T."/>
            <person name="Guerra-Assuncao J.A."/>
            <person name="Zhou Y."/>
            <person name="Gu Y."/>
            <person name="Yen J."/>
            <person name="Vogel J.H."/>
            <person name="Eyre T."/>
            <person name="Redmond S."/>
            <person name="Banerjee R."/>
            <person name="Chi J."/>
            <person name="Fu B."/>
            <person name="Langley E."/>
            <person name="Maguire S.F."/>
            <person name="Laird G.K."/>
            <person name="Lloyd D."/>
            <person name="Kenyon E."/>
            <person name="Donaldson S."/>
            <person name="Sehra H."/>
            <person name="Almeida-King J."/>
            <person name="Loveland J."/>
            <person name="Trevanion S."/>
            <person name="Jones M."/>
            <person name="Quail M."/>
            <person name="Willey D."/>
            <person name="Hunt A."/>
            <person name="Burton J."/>
            <person name="Sims S."/>
            <person name="McLay K."/>
            <person name="Plumb B."/>
            <person name="Davis J."/>
            <person name="Clee C."/>
            <person name="Oliver K."/>
            <person name="Clark R."/>
            <person name="Riddle C."/>
            <person name="Elliot D."/>
            <person name="Threadgold G."/>
            <person name="Harden G."/>
            <person name="Ware D."/>
            <person name="Begum S."/>
            <person name="Mortimore B."/>
            <person name="Kerry G."/>
            <person name="Heath P."/>
            <person name="Phillimore B."/>
            <person name="Tracey A."/>
            <person name="Corby N."/>
            <person name="Dunn M."/>
            <person name="Johnson C."/>
            <person name="Wood J."/>
            <person name="Clark S."/>
            <person name="Pelan S."/>
            <person name="Griffiths G."/>
            <person name="Smith M."/>
            <person name="Glithero R."/>
            <person name="Howden P."/>
            <person name="Barker N."/>
            <person name="Lloyd C."/>
            <person name="Stevens C."/>
            <person name="Harley J."/>
            <person name="Holt K."/>
            <person name="Panagiotidis G."/>
            <person name="Lovell J."/>
            <person name="Beasley H."/>
            <person name="Henderson C."/>
            <person name="Gordon D."/>
            <person name="Auger K."/>
            <person name="Wright D."/>
            <person name="Collins J."/>
            <person name="Raisen C."/>
            <person name="Dyer L."/>
            <person name="Leung K."/>
            <person name="Robertson L."/>
            <person name="Ambridge K."/>
            <person name="Leongamornlert D."/>
            <person name="McGuire S."/>
            <person name="Gilderthorp R."/>
            <person name="Griffiths C."/>
            <person name="Manthravadi D."/>
            <person name="Nichol S."/>
            <person name="Barker G."/>
            <person name="Whitehead S."/>
            <person name="Kay M."/>
            <person name="Brown J."/>
            <person name="Murnane C."/>
            <person name="Gray E."/>
            <person name="Humphries M."/>
            <person name="Sycamore N."/>
            <person name="Barker D."/>
            <person name="Saunders D."/>
            <person name="Wallis J."/>
            <person name="Babbage A."/>
            <person name="Hammond S."/>
            <person name="Mashreghi-Mohammadi M."/>
            <person name="Barr L."/>
            <person name="Martin S."/>
            <person name="Wray P."/>
            <person name="Ellington A."/>
            <person name="Matthews N."/>
            <person name="Ellwood M."/>
            <person name="Woodmansey R."/>
            <person name="Clark G."/>
            <person name="Cooper J."/>
            <person name="Tromans A."/>
            <person name="Grafham D."/>
            <person name="Skuce C."/>
            <person name="Pandian R."/>
            <person name="Andrews R."/>
            <person name="Harrison E."/>
            <person name="Kimberley A."/>
            <person name="Garnett J."/>
            <person name="Fosker N."/>
            <person name="Hall R."/>
            <person name="Garner P."/>
            <person name="Kelly D."/>
            <person name="Bird C."/>
            <person name="Palmer S."/>
            <person name="Gehring I."/>
            <person name="Berger A."/>
            <person name="Dooley C.M."/>
            <person name="Ersan-Urun Z."/>
            <person name="Eser C."/>
            <person name="Geiger H."/>
            <person name="Geisler M."/>
            <person name="Karotki L."/>
            <person name="Kirn A."/>
            <person name="Konantz J."/>
            <person name="Konantz M."/>
            <person name="Oberlander M."/>
            <person name="Rudolph-Geiger S."/>
            <person name="Teucke M."/>
            <person name="Lanz C."/>
            <person name="Raddatz G."/>
            <person name="Osoegawa K."/>
            <person name="Zhu B."/>
            <person name="Rapp A."/>
            <person name="Widaa S."/>
            <person name="Langford C."/>
            <person name="Yang F."/>
            <person name="Schuster S.C."/>
            <person name="Carter N.P."/>
            <person name="Harrow J."/>
            <person name="Ning Z."/>
            <person name="Herrero J."/>
            <person name="Searle S.M."/>
            <person name="Enright A."/>
            <person name="Geisler R."/>
            <person name="Plasterk R.H."/>
            <person name="Lee C."/>
            <person name="Westerfield M."/>
            <person name="de Jong P.J."/>
            <person name="Zon L.I."/>
            <person name="Postlethwait J.H."/>
            <person name="Nusslein-Volhard C."/>
            <person name="Hubbard T.J."/>
            <person name="Roest Crollius H."/>
            <person name="Rogers J."/>
            <person name="Stemple D.L."/>
        </authorList>
    </citation>
    <scope>NUCLEOTIDE SEQUENCE [LARGE SCALE GENOMIC DNA]</scope>
    <source>
        <strain>Tuebingen</strain>
    </source>
</reference>
<proteinExistence type="inferred from homology"/>
<accession>Q5SPB6</accession>
<evidence type="ECO:0000250" key="1">
    <source>
        <dbReference type="UniProtKB" id="O75223"/>
    </source>
</evidence>
<evidence type="ECO:0000250" key="2">
    <source>
        <dbReference type="UniProtKB" id="Q8R3J5"/>
    </source>
</evidence>
<evidence type="ECO:0000250" key="3">
    <source>
        <dbReference type="UniProtKB" id="Q9BUX1"/>
    </source>
</evidence>
<evidence type="ECO:0000305" key="4"/>
<keyword id="KW-0053">Apoptosis</keyword>
<keyword id="KW-0963">Cytoplasm</keyword>
<keyword id="KW-0333">Golgi apparatus</keyword>
<keyword id="KW-0456">Lyase</keyword>
<keyword id="KW-0524">Neurogenesis</keyword>
<keyword id="KW-0914">Notch signaling pathway</keyword>
<keyword id="KW-1185">Reference proteome</keyword>
<keyword id="KW-0834">Unfolded protein response</keyword>
<name>CHAC1_DANRE</name>
<sequence length="196" mass="22016">MKPQDIVAGKSSLWIFGYGSLVWKPDFKYKRSKVGYIKGYKRRFWHGDNFHRGDDEMPGRVVTLIEEDDVCTWGVAFEVTGSQMEESLKYLNVREAVRGGYLTRAVDFFPRGTNQPPVQALVYIATPDNPIYLGPASTEEIASQIAVCKGNSGHNIEYLLRLAEFMRVSCPDVDDPHLFSIEAALLATIRPILLAA</sequence>